<dbReference type="EMBL" id="M26405">
    <property type="protein sequence ID" value="AAA27640.1"/>
    <property type="molecule type" value="Genomic_DNA"/>
</dbReference>
<dbReference type="EMBL" id="AF074612">
    <property type="protein sequence ID" value="AAC69798.1"/>
    <property type="molecule type" value="Genomic_DNA"/>
</dbReference>
<dbReference type="EMBL" id="AF053946">
    <property type="protein sequence ID" value="AAC62573.1"/>
    <property type="molecule type" value="Genomic_DNA"/>
</dbReference>
<dbReference type="EMBL" id="AL117189">
    <property type="protein sequence ID" value="CAB54909.1"/>
    <property type="molecule type" value="Genomic_DNA"/>
</dbReference>
<dbReference type="EMBL" id="AE017043">
    <property type="protein sequence ID" value="AAS58570.1"/>
    <property type="molecule type" value="Genomic_DNA"/>
</dbReference>
<dbReference type="EMBL" id="M35740">
    <property type="protein sequence ID" value="AAA98220.1"/>
    <property type="molecule type" value="Genomic_DNA"/>
</dbReference>
<dbReference type="PIR" id="A33601">
    <property type="entry name" value="A33601"/>
</dbReference>
<dbReference type="RefSeq" id="NP_395166.1">
    <property type="nucleotide sequence ID" value="NC_003131.1"/>
</dbReference>
<dbReference type="RefSeq" id="NP_857750.1">
    <property type="nucleotide sequence ID" value="NC_004836.1"/>
</dbReference>
<dbReference type="RefSeq" id="NP_857945.1">
    <property type="nucleotide sequence ID" value="NC_004839.1"/>
</dbReference>
<dbReference type="RefSeq" id="WP_002212973.1">
    <property type="nucleotide sequence ID" value="NZ_WUCM01000070.1"/>
</dbReference>
<dbReference type="SMR" id="P69957"/>
<dbReference type="IntAct" id="P69957">
    <property type="interactions" value="1"/>
</dbReference>
<dbReference type="PaxDb" id="214092-5832452"/>
<dbReference type="DNASU" id="1149309"/>
<dbReference type="EnsemblBacteria" id="AAS58570">
    <property type="protein sequence ID" value="AAS58570"/>
    <property type="gene ID" value="YP_pCD51"/>
</dbReference>
<dbReference type="KEGG" id="ype:YPCD1.32c"/>
<dbReference type="KEGG" id="ypm:YP_pCD51"/>
<dbReference type="PATRIC" id="fig|214092.21.peg.43"/>
<dbReference type="eggNOG" id="ENOG5033J7A">
    <property type="taxonomic scope" value="Bacteria"/>
</dbReference>
<dbReference type="HOGENOM" id="CLU_183873_0_0_6"/>
<dbReference type="OMA" id="MMRGMVI"/>
<dbReference type="OrthoDB" id="5588872at2"/>
<dbReference type="Proteomes" id="UP000000815">
    <property type="component" value="Plasmid pCD1"/>
</dbReference>
<dbReference type="Proteomes" id="UP000001019">
    <property type="component" value="Plasmid pCD1"/>
</dbReference>
<dbReference type="GO" id="GO:0010629">
    <property type="term" value="P:negative regulation of gene expression"/>
    <property type="evidence" value="ECO:0000315"/>
    <property type="project" value="CACAO"/>
</dbReference>
<dbReference type="InterPro" id="IPR009863">
    <property type="entry name" value="T3SS_LcrG_PcrG"/>
</dbReference>
<dbReference type="NCBIfam" id="TIGR02573">
    <property type="entry name" value="LcrG_PcrG"/>
    <property type="match status" value="1"/>
</dbReference>
<dbReference type="Pfam" id="PF07216">
    <property type="entry name" value="LcrG"/>
    <property type="match status" value="1"/>
</dbReference>
<sequence length="95" mass="11020">MKSSHFDEYDKTLKQAELAIADSDHRAKLLQEMCADIGLTPEAVMKIFAGRSAEEIKPAERELLDEIKRQRERQPQHPYDGKRPRKPTMMRGQII</sequence>
<geneLocation type="plasmid">
    <name>pCD1</name>
</geneLocation>
<organism>
    <name type="scientific">Yersinia pestis</name>
    <dbReference type="NCBI Taxonomy" id="632"/>
    <lineage>
        <taxon>Bacteria</taxon>
        <taxon>Pseudomonadati</taxon>
        <taxon>Pseudomonadota</taxon>
        <taxon>Gammaproteobacteria</taxon>
        <taxon>Enterobacterales</taxon>
        <taxon>Yersiniaceae</taxon>
        <taxon>Yersinia</taxon>
    </lineage>
</organism>
<evidence type="ECO:0000256" key="1">
    <source>
        <dbReference type="SAM" id="MobiDB-lite"/>
    </source>
</evidence>
<reference key="1">
    <citation type="journal article" date="1989" name="J. Bacteriol.">
        <title>Molecular analysis of lcrGVH, the V antigen operon of Yersinia pestis.</title>
        <authorList>
            <person name="Price S.B."/>
            <person name="Leung K.Y."/>
            <person name="Barve S.S."/>
            <person name="Straley S.C."/>
        </authorList>
    </citation>
    <scope>NUCLEOTIDE SEQUENCE [GENOMIC DNA]</scope>
    <source>
        <strain>KIM5 / Biovar Mediaevalis</strain>
    </source>
</reference>
<reference key="2">
    <citation type="journal article" date="1998" name="Infect. Immun.">
        <title>DNA sequencing and analysis of the low-Ca2+-response plasmid pCD1 of Yersinia pestis KIM5.</title>
        <authorList>
            <person name="Perry R.D."/>
            <person name="Straley S.C."/>
            <person name="Fetherston J.D."/>
            <person name="Rose D.J."/>
            <person name="Gregor J."/>
            <person name="Blattner F.R."/>
        </authorList>
    </citation>
    <scope>NUCLEOTIDE SEQUENCE [GENOMIC DNA]</scope>
    <source>
        <strain>KIM5 / Biovar Mediaevalis</strain>
    </source>
</reference>
<reference key="3">
    <citation type="journal article" date="1998" name="J. Bacteriol.">
        <title>Structural organization of virulence-associated plasmids of Yersinia pestis.</title>
        <authorList>
            <person name="Hu P."/>
            <person name="Elliott J."/>
            <person name="McCready P."/>
            <person name="Skowronski E."/>
            <person name="Garnes J."/>
            <person name="Kobayashi A."/>
            <person name="Brubaker R.R."/>
            <person name="Garcia E."/>
        </authorList>
    </citation>
    <scope>NUCLEOTIDE SEQUENCE [GENOMIC DNA]</scope>
    <source>
        <strain>KIM5 / Biovar Mediaevalis</strain>
    </source>
</reference>
<reference key="4">
    <citation type="journal article" date="2001" name="Nature">
        <title>Genome sequence of Yersinia pestis, the causative agent of plague.</title>
        <authorList>
            <person name="Parkhill J."/>
            <person name="Wren B.W."/>
            <person name="Thomson N.R."/>
            <person name="Titball R.W."/>
            <person name="Holden M.T.G."/>
            <person name="Prentice M.B."/>
            <person name="Sebaihia M."/>
            <person name="James K.D."/>
            <person name="Churcher C.M."/>
            <person name="Mungall K.L."/>
            <person name="Baker S."/>
            <person name="Basham D."/>
            <person name="Bentley S.D."/>
            <person name="Brooks K."/>
            <person name="Cerdeno-Tarraga A.-M."/>
            <person name="Chillingworth T."/>
            <person name="Cronin A."/>
            <person name="Davies R.M."/>
            <person name="Davis P."/>
            <person name="Dougan G."/>
            <person name="Feltwell T."/>
            <person name="Hamlin N."/>
            <person name="Holroyd S."/>
            <person name="Jagels K."/>
            <person name="Karlyshev A.V."/>
            <person name="Leather S."/>
            <person name="Moule S."/>
            <person name="Oyston P.C.F."/>
            <person name="Quail M.A."/>
            <person name="Rutherford K.M."/>
            <person name="Simmonds M."/>
            <person name="Skelton J."/>
            <person name="Stevens K."/>
            <person name="Whitehead S."/>
            <person name="Barrell B.G."/>
        </authorList>
    </citation>
    <scope>NUCLEOTIDE SEQUENCE [LARGE SCALE GENOMIC DNA]</scope>
    <source>
        <strain>CO-92 / Biovar Orientalis</strain>
    </source>
</reference>
<reference key="5">
    <citation type="journal article" date="2004" name="DNA Res.">
        <title>Complete genome sequence of Yersinia pestis strain 91001, an isolate avirulent to humans.</title>
        <authorList>
            <person name="Song Y."/>
            <person name="Tong Z."/>
            <person name="Wang J."/>
            <person name="Wang L."/>
            <person name="Guo Z."/>
            <person name="Han Y."/>
            <person name="Zhang J."/>
            <person name="Pei D."/>
            <person name="Zhou D."/>
            <person name="Qin H."/>
            <person name="Pang X."/>
            <person name="Han Y."/>
            <person name="Zhai J."/>
            <person name="Li M."/>
            <person name="Cui B."/>
            <person name="Qi Z."/>
            <person name="Jin L."/>
            <person name="Dai R."/>
            <person name="Chen F."/>
            <person name="Li S."/>
            <person name="Ye C."/>
            <person name="Du Z."/>
            <person name="Lin W."/>
            <person name="Wang J."/>
            <person name="Yu J."/>
            <person name="Yang H."/>
            <person name="Wang J."/>
            <person name="Huang P."/>
            <person name="Yang R."/>
        </authorList>
    </citation>
    <scope>NUCLEOTIDE SEQUENCE [LARGE SCALE GENOMIC DNA]</scope>
    <source>
        <strain>91001 / Biovar Mediaevalis</strain>
    </source>
</reference>
<reference key="6">
    <citation type="journal article" date="1990" name="J. Bacteriol.">
        <title>lcrR, a low-Ca2(+)-response locus with dual Ca2(+)-dependent functions in Yersinia pestis.</title>
        <authorList>
            <person name="Barve S.S."/>
            <person name="Straley S.C."/>
        </authorList>
    </citation>
    <scope>NUCLEOTIDE SEQUENCE [GENOMIC DNA] OF 1-6</scope>
    <source>
        <strain>KIM5 / Biovar Mediaevalis</strain>
    </source>
</reference>
<name>LCRG_YERPE</name>
<protein>
    <recommendedName>
        <fullName>Low calcium response locus protein G</fullName>
    </recommendedName>
</protein>
<proteinExistence type="predicted"/>
<keyword id="KW-0614">Plasmid</keyword>
<keyword id="KW-1185">Reference proteome</keyword>
<gene>
    <name type="primary">lcrG</name>
    <name type="ordered locus">YPCD1.32c</name>
    <name type="ordered locus">y5046</name>
    <name type="ordered locus">y0049</name>
    <name type="ordered locus">YP_pCD51</name>
</gene>
<feature type="chain" id="PRO_0000084371" description="Low calcium response locus protein G">
    <location>
        <begin position="1"/>
        <end position="95"/>
    </location>
</feature>
<feature type="region of interest" description="Disordered" evidence="1">
    <location>
        <begin position="65"/>
        <end position="95"/>
    </location>
</feature>
<feature type="compositionally biased region" description="Basic and acidic residues" evidence="1">
    <location>
        <begin position="65"/>
        <end position="82"/>
    </location>
</feature>
<accession>P69957</accession>
<accession>P19394</accession>
<accession>Q663K8</accession>